<accession>Q81ZV1</accession>
<organism>
    <name type="scientific">Chlamydia caviae (strain ATCC VR-813 / DSM 19441 / 03DC25 / GPIC)</name>
    <name type="common">Chlamydophila caviae</name>
    <dbReference type="NCBI Taxonomy" id="227941"/>
    <lineage>
        <taxon>Bacteria</taxon>
        <taxon>Pseudomonadati</taxon>
        <taxon>Chlamydiota</taxon>
        <taxon>Chlamydiia</taxon>
        <taxon>Chlamydiales</taxon>
        <taxon>Chlamydiaceae</taxon>
        <taxon>Chlamydia/Chlamydophila group</taxon>
        <taxon>Chlamydia</taxon>
    </lineage>
</organism>
<gene>
    <name evidence="1" type="primary">menG</name>
    <name type="ordered locus">CCA_00228</name>
</gene>
<keyword id="KW-0474">Menaquinone biosynthesis</keyword>
<keyword id="KW-0489">Methyltransferase</keyword>
<keyword id="KW-0949">S-adenosyl-L-methionine</keyword>
<keyword id="KW-0808">Transferase</keyword>
<protein>
    <recommendedName>
        <fullName evidence="1">Demethylmenaquinone methyltransferase</fullName>
        <ecNumber evidence="1">2.1.1.163</ecNumber>
    </recommendedName>
</protein>
<sequence length="230" mass="26388">MQLSTNKPDLQEMFDSLAPKYDRINSILSLGMHHLWNRKFSKMLGKSECLLDLCSGTGKVAYRYIHDYPKSQAILVDFSSNMLAIAKQRYPKAPFTFIEGDIAQLPIDQESHTLAAISYGLRNLPDRKNALNEIHRILKPNGCLGILELTSPSDNHPMYLAHRLYLKFLVPLIGRLCSKNKQAYHYLAESIKNLPKDDYLEQLFKDAQFQISKKRKFAFGAATIWILQKI</sequence>
<feature type="chain" id="PRO_0000193263" description="Demethylmenaquinone methyltransferase">
    <location>
        <begin position="1"/>
        <end position="230"/>
    </location>
</feature>
<feature type="binding site" evidence="1">
    <location>
        <position position="57"/>
    </location>
    <ligand>
        <name>S-adenosyl-L-methionine</name>
        <dbReference type="ChEBI" id="CHEBI:59789"/>
    </ligand>
</feature>
<feature type="binding site" evidence="1">
    <location>
        <position position="77"/>
    </location>
    <ligand>
        <name>S-adenosyl-L-methionine</name>
        <dbReference type="ChEBI" id="CHEBI:59789"/>
    </ligand>
</feature>
<feature type="binding site" evidence="1">
    <location>
        <begin position="101"/>
        <end position="102"/>
    </location>
    <ligand>
        <name>S-adenosyl-L-methionine</name>
        <dbReference type="ChEBI" id="CHEBI:59789"/>
    </ligand>
</feature>
<feature type="binding site" evidence="1">
    <location>
        <position position="118"/>
    </location>
    <ligand>
        <name>S-adenosyl-L-methionine</name>
        <dbReference type="ChEBI" id="CHEBI:59789"/>
    </ligand>
</feature>
<reference key="1">
    <citation type="journal article" date="2003" name="Nucleic Acids Res.">
        <title>Genome sequence of Chlamydophila caviae (Chlamydia psittaci GPIC): examining the role of niche-specific genes in the evolution of the Chlamydiaceae.</title>
        <authorList>
            <person name="Read T.D."/>
            <person name="Myers G.S.A."/>
            <person name="Brunham R.C."/>
            <person name="Nelson W.C."/>
            <person name="Paulsen I.T."/>
            <person name="Heidelberg J.F."/>
            <person name="Holtzapple E.K."/>
            <person name="Khouri H.M."/>
            <person name="Federova N.B."/>
            <person name="Carty H.A."/>
            <person name="Umayam L.A."/>
            <person name="Haft D.H."/>
            <person name="Peterson J.D."/>
            <person name="Beanan M.J."/>
            <person name="White O."/>
            <person name="Salzberg S.L."/>
            <person name="Hsia R.-C."/>
            <person name="McClarty G."/>
            <person name="Rank R.G."/>
            <person name="Bavoil P.M."/>
            <person name="Fraser C.M."/>
        </authorList>
    </citation>
    <scope>NUCLEOTIDE SEQUENCE [LARGE SCALE GENOMIC DNA]</scope>
    <source>
        <strain>ATCC VR-813 / DSM 19441 / 03DC25 / GPIC</strain>
    </source>
</reference>
<evidence type="ECO:0000255" key="1">
    <source>
        <dbReference type="HAMAP-Rule" id="MF_01813"/>
    </source>
</evidence>
<dbReference type="EC" id="2.1.1.163" evidence="1"/>
<dbReference type="EMBL" id="AE015925">
    <property type="protein sequence ID" value="AAP04979.1"/>
    <property type="molecule type" value="Genomic_DNA"/>
</dbReference>
<dbReference type="RefSeq" id="WP_011006197.1">
    <property type="nucleotide sequence ID" value="NC_003361.3"/>
</dbReference>
<dbReference type="SMR" id="Q81ZV1"/>
<dbReference type="STRING" id="227941.CCA_00228"/>
<dbReference type="KEGG" id="cca:CCA_00228"/>
<dbReference type="eggNOG" id="COG2226">
    <property type="taxonomic scope" value="Bacteria"/>
</dbReference>
<dbReference type="HOGENOM" id="CLU_037990_0_0_0"/>
<dbReference type="OrthoDB" id="9808140at2"/>
<dbReference type="UniPathway" id="UPA00079">
    <property type="reaction ID" value="UER00169"/>
</dbReference>
<dbReference type="Proteomes" id="UP000002193">
    <property type="component" value="Chromosome"/>
</dbReference>
<dbReference type="GO" id="GO:0043770">
    <property type="term" value="F:demethylmenaquinone methyltransferase activity"/>
    <property type="evidence" value="ECO:0007669"/>
    <property type="project" value="UniProtKB-UniRule"/>
</dbReference>
<dbReference type="GO" id="GO:0009234">
    <property type="term" value="P:menaquinone biosynthetic process"/>
    <property type="evidence" value="ECO:0007669"/>
    <property type="project" value="UniProtKB-UniRule"/>
</dbReference>
<dbReference type="GO" id="GO:0032259">
    <property type="term" value="P:methylation"/>
    <property type="evidence" value="ECO:0007669"/>
    <property type="project" value="UniProtKB-KW"/>
</dbReference>
<dbReference type="CDD" id="cd02440">
    <property type="entry name" value="AdoMet_MTases"/>
    <property type="match status" value="1"/>
</dbReference>
<dbReference type="Gene3D" id="3.40.50.150">
    <property type="entry name" value="Vaccinia Virus protein VP39"/>
    <property type="match status" value="1"/>
</dbReference>
<dbReference type="HAMAP" id="MF_01813">
    <property type="entry name" value="MenG_UbiE_methyltr"/>
    <property type="match status" value="1"/>
</dbReference>
<dbReference type="InterPro" id="IPR029063">
    <property type="entry name" value="SAM-dependent_MTases_sf"/>
</dbReference>
<dbReference type="InterPro" id="IPR004033">
    <property type="entry name" value="UbiE/COQ5_MeTrFase"/>
</dbReference>
<dbReference type="InterPro" id="IPR023576">
    <property type="entry name" value="UbiE/COQ5_MeTrFase_CS"/>
</dbReference>
<dbReference type="NCBIfam" id="TIGR01934">
    <property type="entry name" value="MenG_MenH_UbiE"/>
    <property type="match status" value="1"/>
</dbReference>
<dbReference type="NCBIfam" id="NF001244">
    <property type="entry name" value="PRK00216.1-5"/>
    <property type="match status" value="1"/>
</dbReference>
<dbReference type="PANTHER" id="PTHR43591:SF24">
    <property type="entry name" value="2-METHOXY-6-POLYPRENYL-1,4-BENZOQUINOL METHYLASE, MITOCHONDRIAL"/>
    <property type="match status" value="1"/>
</dbReference>
<dbReference type="PANTHER" id="PTHR43591">
    <property type="entry name" value="METHYLTRANSFERASE"/>
    <property type="match status" value="1"/>
</dbReference>
<dbReference type="Pfam" id="PF01209">
    <property type="entry name" value="Ubie_methyltran"/>
    <property type="match status" value="1"/>
</dbReference>
<dbReference type="SUPFAM" id="SSF53335">
    <property type="entry name" value="S-adenosyl-L-methionine-dependent methyltransferases"/>
    <property type="match status" value="1"/>
</dbReference>
<dbReference type="PROSITE" id="PS51608">
    <property type="entry name" value="SAM_MT_UBIE"/>
    <property type="match status" value="1"/>
</dbReference>
<dbReference type="PROSITE" id="PS01183">
    <property type="entry name" value="UBIE_1"/>
    <property type="match status" value="1"/>
</dbReference>
<name>MENG_CHLCV</name>
<proteinExistence type="inferred from homology"/>
<comment type="function">
    <text evidence="1">Methyltransferase required for the conversion of demethylmenaquinol (DMKH2) to menaquinol (MKH2).</text>
</comment>
<comment type="catalytic activity">
    <reaction evidence="1">
        <text>a 2-demethylmenaquinol + S-adenosyl-L-methionine = a menaquinol + S-adenosyl-L-homocysteine + H(+)</text>
        <dbReference type="Rhea" id="RHEA:42640"/>
        <dbReference type="Rhea" id="RHEA-COMP:9539"/>
        <dbReference type="Rhea" id="RHEA-COMP:9563"/>
        <dbReference type="ChEBI" id="CHEBI:15378"/>
        <dbReference type="ChEBI" id="CHEBI:18151"/>
        <dbReference type="ChEBI" id="CHEBI:55437"/>
        <dbReference type="ChEBI" id="CHEBI:57856"/>
        <dbReference type="ChEBI" id="CHEBI:59789"/>
        <dbReference type="EC" id="2.1.1.163"/>
    </reaction>
</comment>
<comment type="pathway">
    <text evidence="1">Quinol/quinone metabolism; menaquinone biosynthesis; menaquinol from 1,4-dihydroxy-2-naphthoate: step 2/2.</text>
</comment>
<comment type="similarity">
    <text evidence="1">Belongs to the class I-like SAM-binding methyltransferase superfamily. MenG/UbiE family.</text>
</comment>